<reference key="1">
    <citation type="journal article" date="2006" name="Proc. Natl. Acad. Sci. U.S.A.">
        <title>The complete genome of Rhodococcus sp. RHA1 provides insights into a catabolic powerhouse.</title>
        <authorList>
            <person name="McLeod M.P."/>
            <person name="Warren R.L."/>
            <person name="Hsiao W.W.L."/>
            <person name="Araki N."/>
            <person name="Myhre M."/>
            <person name="Fernandes C."/>
            <person name="Miyazawa D."/>
            <person name="Wong W."/>
            <person name="Lillquist A.L."/>
            <person name="Wang D."/>
            <person name="Dosanjh M."/>
            <person name="Hara H."/>
            <person name="Petrescu A."/>
            <person name="Morin R.D."/>
            <person name="Yang G."/>
            <person name="Stott J.M."/>
            <person name="Schein J.E."/>
            <person name="Shin H."/>
            <person name="Smailus D."/>
            <person name="Siddiqui A.S."/>
            <person name="Marra M.A."/>
            <person name="Jones S.J.M."/>
            <person name="Holt R."/>
            <person name="Brinkman F.S.L."/>
            <person name="Miyauchi K."/>
            <person name="Fukuda M."/>
            <person name="Davies J.E."/>
            <person name="Mohn W.W."/>
            <person name="Eltis L.D."/>
        </authorList>
    </citation>
    <scope>NUCLEOTIDE SEQUENCE [LARGE SCALE GENOMIC DNA]</scope>
    <source>
        <strain>RHA1</strain>
    </source>
</reference>
<evidence type="ECO:0000255" key="1">
    <source>
        <dbReference type="HAMAP-Rule" id="MF_01695"/>
    </source>
</evidence>
<accession>Q0SF06</accession>
<sequence length="452" mass="48243">MREHYGVVTPMHNSRPRRVAVLSVHTSPLAQPGTGDAGGMNVYVLQSAIQMARRGVEVEIFTRATSSADAPVQEAAPGVLVRNVVAGPFEGLDKQDLPTQLCAFVAGVLREEARHEPGYYNLVHSHYWLSGQVGWLARDRWGVPLVHTAHTLAAVKNLSLADGDTPEPAARQIGEQQVVAESDRLVANTTEESDQLVRHYGADPNRIDVVAPGADLTRYRPGDRAAARAKLGLDPRETVVTFVGRIQPLKAPDVLLRAAAELIARDPESTLRVLVVGGPSGSGLARPDALIELASSLGIAARVTFLPPQAPDRLVDVYRASDLVAVPSYSESFGLVAIEAQACGTPVIAANVGGLGVAVRNGETGLLVDGHRTEDWATALQSLVSEPGRLAALAAEAPRHAENFSWEHTADGLLESYRMATVNYNYGHGPSEFAPRRAGGLWKLRRAGGVRA</sequence>
<protein>
    <recommendedName>
        <fullName>D-inositol 3-phosphate glycosyltransferase</fullName>
        <ecNumber evidence="1">2.4.1.250</ecNumber>
    </recommendedName>
    <alternativeName>
        <fullName evidence="1">N-acetylglucosamine-inositol-phosphate N-acetylglucosaminyltransferase</fullName>
        <shortName evidence="1">GlcNAc-Ins-P N-acetylglucosaminyltransferase</shortName>
    </alternativeName>
</protein>
<proteinExistence type="inferred from homology"/>
<feature type="chain" id="PRO_0000400152" description="D-inositol 3-phosphate glycosyltransferase">
    <location>
        <begin position="1"/>
        <end position="452"/>
    </location>
</feature>
<feature type="binding site" evidence="1">
    <location>
        <position position="25"/>
    </location>
    <ligand>
        <name>1D-myo-inositol 3-phosphate</name>
        <dbReference type="ChEBI" id="CHEBI:58401"/>
    </ligand>
</feature>
<feature type="binding site" evidence="1">
    <location>
        <begin position="31"/>
        <end position="32"/>
    </location>
    <ligand>
        <name>UDP-N-acetyl-alpha-D-glucosamine</name>
        <dbReference type="ChEBI" id="CHEBI:57705"/>
    </ligand>
</feature>
<feature type="binding site" evidence="1">
    <location>
        <begin position="36"/>
        <end position="41"/>
    </location>
    <ligand>
        <name>1D-myo-inositol 3-phosphate</name>
        <dbReference type="ChEBI" id="CHEBI:58401"/>
    </ligand>
</feature>
<feature type="binding site" evidence="1">
    <location>
        <position position="39"/>
    </location>
    <ligand>
        <name>UDP-N-acetyl-alpha-D-glucosamine</name>
        <dbReference type="ChEBI" id="CHEBI:57705"/>
    </ligand>
</feature>
<feature type="binding site" evidence="1">
    <location>
        <position position="94"/>
    </location>
    <ligand>
        <name>1D-myo-inositol 3-phosphate</name>
        <dbReference type="ChEBI" id="CHEBI:58401"/>
    </ligand>
</feature>
<feature type="binding site" evidence="1">
    <location>
        <position position="127"/>
    </location>
    <ligand>
        <name>1D-myo-inositol 3-phosphate</name>
        <dbReference type="ChEBI" id="CHEBI:58401"/>
    </ligand>
</feature>
<feature type="binding site" evidence="1">
    <location>
        <position position="151"/>
    </location>
    <ligand>
        <name>1D-myo-inositol 3-phosphate</name>
        <dbReference type="ChEBI" id="CHEBI:58401"/>
    </ligand>
</feature>
<feature type="binding site" evidence="1">
    <location>
        <position position="171"/>
    </location>
    <ligand>
        <name>1D-myo-inositol 3-phosphate</name>
        <dbReference type="ChEBI" id="CHEBI:58401"/>
    </ligand>
</feature>
<feature type="binding site" evidence="1">
    <location>
        <position position="245"/>
    </location>
    <ligand>
        <name>UDP-N-acetyl-alpha-D-glucosamine</name>
        <dbReference type="ChEBI" id="CHEBI:57705"/>
    </ligand>
</feature>
<feature type="binding site" evidence="1">
    <location>
        <position position="250"/>
    </location>
    <ligand>
        <name>UDP-N-acetyl-alpha-D-glucosamine</name>
        <dbReference type="ChEBI" id="CHEBI:57705"/>
    </ligand>
</feature>
<feature type="binding site" evidence="1">
    <location>
        <position position="309"/>
    </location>
    <ligand>
        <name>UDP-N-acetyl-alpha-D-glucosamine</name>
        <dbReference type="ChEBI" id="CHEBI:57705"/>
    </ligand>
</feature>
<feature type="binding site" evidence="1">
    <location>
        <position position="318"/>
    </location>
    <ligand>
        <name>Mg(2+)</name>
        <dbReference type="ChEBI" id="CHEBI:18420"/>
    </ligand>
</feature>
<feature type="binding site" evidence="1">
    <location>
        <position position="319"/>
    </location>
    <ligand>
        <name>Mg(2+)</name>
        <dbReference type="ChEBI" id="CHEBI:18420"/>
    </ligand>
</feature>
<feature type="binding site" evidence="1">
    <location>
        <position position="321"/>
    </location>
    <ligand>
        <name>Mg(2+)</name>
        <dbReference type="ChEBI" id="CHEBI:18420"/>
    </ligand>
</feature>
<feature type="binding site" evidence="1">
    <location>
        <position position="331"/>
    </location>
    <ligand>
        <name>UDP-N-acetyl-alpha-D-glucosamine</name>
        <dbReference type="ChEBI" id="CHEBI:57705"/>
    </ligand>
</feature>
<feature type="binding site" evidence="1">
    <location>
        <position position="339"/>
    </location>
    <ligand>
        <name>UDP-N-acetyl-alpha-D-glucosamine</name>
        <dbReference type="ChEBI" id="CHEBI:57705"/>
    </ligand>
</feature>
<feature type="binding site" evidence="1">
    <location>
        <position position="345"/>
    </location>
    <ligand>
        <name>Mg(2+)</name>
        <dbReference type="ChEBI" id="CHEBI:18420"/>
    </ligand>
</feature>
<gene>
    <name evidence="1" type="primary">mshA</name>
    <name type="ordered locus">RHA1_ro02073</name>
</gene>
<name>MSHA_RHOJR</name>
<organism>
    <name type="scientific">Rhodococcus jostii (strain RHA1)</name>
    <dbReference type="NCBI Taxonomy" id="101510"/>
    <lineage>
        <taxon>Bacteria</taxon>
        <taxon>Bacillati</taxon>
        <taxon>Actinomycetota</taxon>
        <taxon>Actinomycetes</taxon>
        <taxon>Mycobacteriales</taxon>
        <taxon>Nocardiaceae</taxon>
        <taxon>Rhodococcus</taxon>
    </lineage>
</organism>
<comment type="function">
    <text evidence="1">Catalyzes the transfer of a N-acetyl-glucosamine moiety to 1D-myo-inositol 3-phosphate to produce 1D-myo-inositol 2-acetamido-2-deoxy-glucopyranoside 3-phosphate in the mycothiol biosynthesis pathway.</text>
</comment>
<comment type="catalytic activity">
    <reaction evidence="1">
        <text>1D-myo-inositol 3-phosphate + UDP-N-acetyl-alpha-D-glucosamine = 1D-myo-inositol 2-acetamido-2-deoxy-alpha-D-glucopyranoside 3-phosphate + UDP + H(+)</text>
        <dbReference type="Rhea" id="RHEA:26188"/>
        <dbReference type="ChEBI" id="CHEBI:15378"/>
        <dbReference type="ChEBI" id="CHEBI:57705"/>
        <dbReference type="ChEBI" id="CHEBI:58223"/>
        <dbReference type="ChEBI" id="CHEBI:58401"/>
        <dbReference type="ChEBI" id="CHEBI:58892"/>
        <dbReference type="EC" id="2.4.1.250"/>
    </reaction>
</comment>
<comment type="subunit">
    <text evidence="1">Homodimer.</text>
</comment>
<comment type="similarity">
    <text evidence="1">Belongs to the glycosyltransferase group 1 family. MshA subfamily.</text>
</comment>
<keyword id="KW-0328">Glycosyltransferase</keyword>
<keyword id="KW-0460">Magnesium</keyword>
<keyword id="KW-0479">Metal-binding</keyword>
<keyword id="KW-0808">Transferase</keyword>
<dbReference type="EC" id="2.4.1.250" evidence="1"/>
<dbReference type="EMBL" id="CP000431">
    <property type="protein sequence ID" value="ABG93880.1"/>
    <property type="molecule type" value="Genomic_DNA"/>
</dbReference>
<dbReference type="RefSeq" id="WP_011594914.1">
    <property type="nucleotide sequence ID" value="NC_008268.1"/>
</dbReference>
<dbReference type="SMR" id="Q0SF06"/>
<dbReference type="CAZy" id="GT4">
    <property type="family name" value="Glycosyltransferase Family 4"/>
</dbReference>
<dbReference type="KEGG" id="rha:RHA1_ro02073"/>
<dbReference type="eggNOG" id="COG0438">
    <property type="taxonomic scope" value="Bacteria"/>
</dbReference>
<dbReference type="HOGENOM" id="CLU_009583_2_3_11"/>
<dbReference type="Proteomes" id="UP000008710">
    <property type="component" value="Chromosome"/>
</dbReference>
<dbReference type="GO" id="GO:0008375">
    <property type="term" value="F:acetylglucosaminyltransferase activity"/>
    <property type="evidence" value="ECO:0007669"/>
    <property type="project" value="UniProtKB-UniRule"/>
</dbReference>
<dbReference type="GO" id="GO:0102710">
    <property type="term" value="F:D-inositol-3-phosphate glycosyltransferase activity"/>
    <property type="evidence" value="ECO:0007669"/>
    <property type="project" value="UniProtKB-EC"/>
</dbReference>
<dbReference type="GO" id="GO:0000287">
    <property type="term" value="F:magnesium ion binding"/>
    <property type="evidence" value="ECO:0007669"/>
    <property type="project" value="UniProtKB-UniRule"/>
</dbReference>
<dbReference type="GO" id="GO:0010125">
    <property type="term" value="P:mycothiol biosynthetic process"/>
    <property type="evidence" value="ECO:0007669"/>
    <property type="project" value="UniProtKB-UniRule"/>
</dbReference>
<dbReference type="CDD" id="cd03800">
    <property type="entry name" value="GT4_sucrose_synthase"/>
    <property type="match status" value="1"/>
</dbReference>
<dbReference type="Gene3D" id="3.40.50.2000">
    <property type="entry name" value="Glycogen Phosphorylase B"/>
    <property type="match status" value="2"/>
</dbReference>
<dbReference type="HAMAP" id="MF_01695">
    <property type="entry name" value="MshA"/>
    <property type="match status" value="1"/>
</dbReference>
<dbReference type="InterPro" id="IPR001296">
    <property type="entry name" value="Glyco_trans_1"/>
</dbReference>
<dbReference type="InterPro" id="IPR028098">
    <property type="entry name" value="Glyco_trans_4-like_N"/>
</dbReference>
<dbReference type="InterPro" id="IPR017814">
    <property type="entry name" value="Mycothiol_biosynthesis_MshA"/>
</dbReference>
<dbReference type="NCBIfam" id="TIGR03449">
    <property type="entry name" value="mycothiol_MshA"/>
    <property type="match status" value="1"/>
</dbReference>
<dbReference type="PANTHER" id="PTHR12526:SF510">
    <property type="entry name" value="D-INOSITOL 3-PHOSPHATE GLYCOSYLTRANSFERASE"/>
    <property type="match status" value="1"/>
</dbReference>
<dbReference type="PANTHER" id="PTHR12526">
    <property type="entry name" value="GLYCOSYLTRANSFERASE"/>
    <property type="match status" value="1"/>
</dbReference>
<dbReference type="Pfam" id="PF13579">
    <property type="entry name" value="Glyco_trans_4_4"/>
    <property type="match status" value="1"/>
</dbReference>
<dbReference type="Pfam" id="PF00534">
    <property type="entry name" value="Glycos_transf_1"/>
    <property type="match status" value="1"/>
</dbReference>
<dbReference type="SUPFAM" id="SSF53756">
    <property type="entry name" value="UDP-Glycosyltransferase/glycogen phosphorylase"/>
    <property type="match status" value="1"/>
</dbReference>